<accession>A3QG64</accession>
<dbReference type="EC" id="6.1.1.15" evidence="1"/>
<dbReference type="EMBL" id="CP000606">
    <property type="protein sequence ID" value="ABO24462.1"/>
    <property type="molecule type" value="Genomic_DNA"/>
</dbReference>
<dbReference type="RefSeq" id="WP_011866393.1">
    <property type="nucleotide sequence ID" value="NC_009092.1"/>
</dbReference>
<dbReference type="SMR" id="A3QG64"/>
<dbReference type="STRING" id="323850.Shew_2596"/>
<dbReference type="KEGG" id="slo:Shew_2596"/>
<dbReference type="eggNOG" id="COG0442">
    <property type="taxonomic scope" value="Bacteria"/>
</dbReference>
<dbReference type="HOGENOM" id="CLU_016739_0_0_6"/>
<dbReference type="OrthoDB" id="9809052at2"/>
<dbReference type="Proteomes" id="UP000001558">
    <property type="component" value="Chromosome"/>
</dbReference>
<dbReference type="GO" id="GO:0005829">
    <property type="term" value="C:cytosol"/>
    <property type="evidence" value="ECO:0007669"/>
    <property type="project" value="TreeGrafter"/>
</dbReference>
<dbReference type="GO" id="GO:0002161">
    <property type="term" value="F:aminoacyl-tRNA deacylase activity"/>
    <property type="evidence" value="ECO:0007669"/>
    <property type="project" value="InterPro"/>
</dbReference>
<dbReference type="GO" id="GO:0005524">
    <property type="term" value="F:ATP binding"/>
    <property type="evidence" value="ECO:0007669"/>
    <property type="project" value="UniProtKB-UniRule"/>
</dbReference>
<dbReference type="GO" id="GO:0004827">
    <property type="term" value="F:proline-tRNA ligase activity"/>
    <property type="evidence" value="ECO:0007669"/>
    <property type="project" value="UniProtKB-UniRule"/>
</dbReference>
<dbReference type="GO" id="GO:0006433">
    <property type="term" value="P:prolyl-tRNA aminoacylation"/>
    <property type="evidence" value="ECO:0007669"/>
    <property type="project" value="UniProtKB-UniRule"/>
</dbReference>
<dbReference type="CDD" id="cd04334">
    <property type="entry name" value="ProRS-INS"/>
    <property type="match status" value="1"/>
</dbReference>
<dbReference type="CDD" id="cd00861">
    <property type="entry name" value="ProRS_anticodon_short"/>
    <property type="match status" value="1"/>
</dbReference>
<dbReference type="CDD" id="cd00779">
    <property type="entry name" value="ProRS_core_prok"/>
    <property type="match status" value="1"/>
</dbReference>
<dbReference type="FunFam" id="3.30.930.10:FF:000043">
    <property type="entry name" value="Proline--tRNA ligase"/>
    <property type="match status" value="1"/>
</dbReference>
<dbReference type="FunFam" id="3.30.930.10:FF:000062">
    <property type="entry name" value="Proline--tRNA ligase"/>
    <property type="match status" value="1"/>
</dbReference>
<dbReference type="FunFam" id="3.40.50.800:FF:000006">
    <property type="entry name" value="Proline--tRNA ligase"/>
    <property type="match status" value="1"/>
</dbReference>
<dbReference type="Gene3D" id="3.40.50.800">
    <property type="entry name" value="Anticodon-binding domain"/>
    <property type="match status" value="1"/>
</dbReference>
<dbReference type="Gene3D" id="3.30.930.10">
    <property type="entry name" value="Bira Bifunctional Protein, Domain 2"/>
    <property type="match status" value="2"/>
</dbReference>
<dbReference type="HAMAP" id="MF_01569">
    <property type="entry name" value="Pro_tRNA_synth_type1"/>
    <property type="match status" value="1"/>
</dbReference>
<dbReference type="InterPro" id="IPR002314">
    <property type="entry name" value="aa-tRNA-synt_IIb"/>
</dbReference>
<dbReference type="InterPro" id="IPR006195">
    <property type="entry name" value="aa-tRNA-synth_II"/>
</dbReference>
<dbReference type="InterPro" id="IPR045864">
    <property type="entry name" value="aa-tRNA-synth_II/BPL/LPL"/>
</dbReference>
<dbReference type="InterPro" id="IPR004154">
    <property type="entry name" value="Anticodon-bd"/>
</dbReference>
<dbReference type="InterPro" id="IPR036621">
    <property type="entry name" value="Anticodon-bd_dom_sf"/>
</dbReference>
<dbReference type="InterPro" id="IPR002316">
    <property type="entry name" value="Pro-tRNA-ligase_IIa"/>
</dbReference>
<dbReference type="InterPro" id="IPR004500">
    <property type="entry name" value="Pro-tRNA-synth_IIa_bac-type"/>
</dbReference>
<dbReference type="InterPro" id="IPR023717">
    <property type="entry name" value="Pro-tRNA-Synthase_IIa_type1"/>
</dbReference>
<dbReference type="InterPro" id="IPR050062">
    <property type="entry name" value="Pro-tRNA_synthetase"/>
</dbReference>
<dbReference type="InterPro" id="IPR044140">
    <property type="entry name" value="ProRS_anticodon_short"/>
</dbReference>
<dbReference type="InterPro" id="IPR033730">
    <property type="entry name" value="ProRS_core_prok"/>
</dbReference>
<dbReference type="InterPro" id="IPR036754">
    <property type="entry name" value="YbaK/aa-tRNA-synt-asso_dom_sf"/>
</dbReference>
<dbReference type="InterPro" id="IPR007214">
    <property type="entry name" value="YbaK/aa-tRNA-synth-assoc-dom"/>
</dbReference>
<dbReference type="NCBIfam" id="NF006625">
    <property type="entry name" value="PRK09194.1"/>
    <property type="match status" value="1"/>
</dbReference>
<dbReference type="NCBIfam" id="TIGR00409">
    <property type="entry name" value="proS_fam_II"/>
    <property type="match status" value="1"/>
</dbReference>
<dbReference type="PANTHER" id="PTHR42753">
    <property type="entry name" value="MITOCHONDRIAL RIBOSOME PROTEIN L39/PROLYL-TRNA LIGASE FAMILY MEMBER"/>
    <property type="match status" value="1"/>
</dbReference>
<dbReference type="PANTHER" id="PTHR42753:SF2">
    <property type="entry name" value="PROLINE--TRNA LIGASE"/>
    <property type="match status" value="1"/>
</dbReference>
<dbReference type="Pfam" id="PF03129">
    <property type="entry name" value="HGTP_anticodon"/>
    <property type="match status" value="1"/>
</dbReference>
<dbReference type="Pfam" id="PF00587">
    <property type="entry name" value="tRNA-synt_2b"/>
    <property type="match status" value="1"/>
</dbReference>
<dbReference type="Pfam" id="PF04073">
    <property type="entry name" value="tRNA_edit"/>
    <property type="match status" value="1"/>
</dbReference>
<dbReference type="PIRSF" id="PIRSF001535">
    <property type="entry name" value="ProRS_1"/>
    <property type="match status" value="1"/>
</dbReference>
<dbReference type="PRINTS" id="PR01046">
    <property type="entry name" value="TRNASYNTHPRO"/>
</dbReference>
<dbReference type="SUPFAM" id="SSF52954">
    <property type="entry name" value="Class II aaRS ABD-related"/>
    <property type="match status" value="1"/>
</dbReference>
<dbReference type="SUPFAM" id="SSF55681">
    <property type="entry name" value="Class II aaRS and biotin synthetases"/>
    <property type="match status" value="1"/>
</dbReference>
<dbReference type="SUPFAM" id="SSF55826">
    <property type="entry name" value="YbaK/ProRS associated domain"/>
    <property type="match status" value="1"/>
</dbReference>
<dbReference type="PROSITE" id="PS50862">
    <property type="entry name" value="AA_TRNA_LIGASE_II"/>
    <property type="match status" value="1"/>
</dbReference>
<evidence type="ECO:0000255" key="1">
    <source>
        <dbReference type="HAMAP-Rule" id="MF_01569"/>
    </source>
</evidence>
<reference key="1">
    <citation type="submission" date="2007-03" db="EMBL/GenBank/DDBJ databases">
        <title>Complete sequence of Shewanella loihica PV-4.</title>
        <authorList>
            <consortium name="US DOE Joint Genome Institute"/>
            <person name="Copeland A."/>
            <person name="Lucas S."/>
            <person name="Lapidus A."/>
            <person name="Barry K."/>
            <person name="Detter J.C."/>
            <person name="Glavina del Rio T."/>
            <person name="Hammon N."/>
            <person name="Israni S."/>
            <person name="Dalin E."/>
            <person name="Tice H."/>
            <person name="Pitluck S."/>
            <person name="Chain P."/>
            <person name="Malfatti S."/>
            <person name="Shin M."/>
            <person name="Vergez L."/>
            <person name="Schmutz J."/>
            <person name="Larimer F."/>
            <person name="Land M."/>
            <person name="Hauser L."/>
            <person name="Kyrpides N."/>
            <person name="Mikhailova N."/>
            <person name="Romine M.F."/>
            <person name="Serres G."/>
            <person name="Fredrickson J."/>
            <person name="Tiedje J."/>
            <person name="Richardson P."/>
        </authorList>
    </citation>
    <scope>NUCLEOTIDE SEQUENCE [LARGE SCALE GENOMIC DNA]</scope>
    <source>
        <strain>ATCC BAA-1088 / PV-4</strain>
    </source>
</reference>
<feature type="chain" id="PRO_1000069161" description="Proline--tRNA ligase">
    <location>
        <begin position="1"/>
        <end position="569"/>
    </location>
</feature>
<proteinExistence type="inferred from homology"/>
<protein>
    <recommendedName>
        <fullName evidence="1">Proline--tRNA ligase</fullName>
        <ecNumber evidence="1">6.1.1.15</ecNumber>
    </recommendedName>
    <alternativeName>
        <fullName evidence="1">Prolyl-tRNA synthetase</fullName>
        <shortName evidence="1">ProRS</shortName>
    </alternativeName>
</protein>
<gene>
    <name evidence="1" type="primary">proS</name>
    <name type="ordered locus">Shew_2596</name>
</gene>
<sequence length="569" mass="63083">MRVSKYLLSTQKETPANAEVVSHQLMLRAGMIRRNASGLYSWLPSGLRVLRKVEAIVREEMNNAGAVEILMPMVQPADLWVETGRWDKFGPELLRFQDRHNRDFVLGPTHEEVITDIIRKEVSSYKQLPLNLYQIQTKFRDEVRPRFGVMRSREFLMKDAYSFHLDQETMDDTYQAMYTAYSNILGRMGLAFRPVLADTGSIGGSMSHEFHVLANSGEDLIAYSTESDYAANIEKAEAPMPTEPRGAATMEMSVIDTPNAKTIEELVEQHGIAIEKTIKTIIVKGASEEAPLVAVIVRGDHELNEVKVEKLDAVLAPFEMAGEAEIRDALGAGPGSLGPVGMTIPVYVDHSVNVMSDFAAGANQDGKHYVGINWERDLPQAEVADLRNVIEGEPSPCGKGTIGLLRGIEVGHIFQLGTNYSKAMGASVLDENGKAQTLLMGCYGVGVSRIVAAAIEQNHDDRGIIWPAAIAPFKVGILPMNMHKSHRIKDMAEKLYSDLSDAGIEVLFDDRKERPGVMFADMELIGLPHVIVIGERNIDNGVFEYKNRRTGEKQEIPFEEIVDFIKSAK</sequence>
<organism>
    <name type="scientific">Shewanella loihica (strain ATCC BAA-1088 / PV-4)</name>
    <dbReference type="NCBI Taxonomy" id="323850"/>
    <lineage>
        <taxon>Bacteria</taxon>
        <taxon>Pseudomonadati</taxon>
        <taxon>Pseudomonadota</taxon>
        <taxon>Gammaproteobacteria</taxon>
        <taxon>Alteromonadales</taxon>
        <taxon>Shewanellaceae</taxon>
        <taxon>Shewanella</taxon>
    </lineage>
</organism>
<comment type="function">
    <text evidence="1">Catalyzes the attachment of proline to tRNA(Pro) in a two-step reaction: proline is first activated by ATP to form Pro-AMP and then transferred to the acceptor end of tRNA(Pro). As ProRS can inadvertently accommodate and process non-cognate amino acids such as alanine and cysteine, to avoid such errors it has two additional distinct editing activities against alanine. One activity is designated as 'pretransfer' editing and involves the tRNA(Pro)-independent hydrolysis of activated Ala-AMP. The other activity is designated 'posttransfer' editing and involves deacylation of mischarged Ala-tRNA(Pro). The misacylated Cys-tRNA(Pro) is not edited by ProRS.</text>
</comment>
<comment type="catalytic activity">
    <reaction evidence="1">
        <text>tRNA(Pro) + L-proline + ATP = L-prolyl-tRNA(Pro) + AMP + diphosphate</text>
        <dbReference type="Rhea" id="RHEA:14305"/>
        <dbReference type="Rhea" id="RHEA-COMP:9700"/>
        <dbReference type="Rhea" id="RHEA-COMP:9702"/>
        <dbReference type="ChEBI" id="CHEBI:30616"/>
        <dbReference type="ChEBI" id="CHEBI:33019"/>
        <dbReference type="ChEBI" id="CHEBI:60039"/>
        <dbReference type="ChEBI" id="CHEBI:78442"/>
        <dbReference type="ChEBI" id="CHEBI:78532"/>
        <dbReference type="ChEBI" id="CHEBI:456215"/>
        <dbReference type="EC" id="6.1.1.15"/>
    </reaction>
</comment>
<comment type="subunit">
    <text evidence="1">Homodimer.</text>
</comment>
<comment type="subcellular location">
    <subcellularLocation>
        <location evidence="1">Cytoplasm</location>
    </subcellularLocation>
</comment>
<comment type="domain">
    <text evidence="1">Consists of three domains: the N-terminal catalytic domain, the editing domain and the C-terminal anticodon-binding domain.</text>
</comment>
<comment type="similarity">
    <text evidence="1">Belongs to the class-II aminoacyl-tRNA synthetase family. ProS type 1 subfamily.</text>
</comment>
<name>SYP_SHELP</name>
<keyword id="KW-0030">Aminoacyl-tRNA synthetase</keyword>
<keyword id="KW-0067">ATP-binding</keyword>
<keyword id="KW-0963">Cytoplasm</keyword>
<keyword id="KW-0436">Ligase</keyword>
<keyword id="KW-0547">Nucleotide-binding</keyword>
<keyword id="KW-0648">Protein biosynthesis</keyword>
<keyword id="KW-1185">Reference proteome</keyword>